<reference key="1">
    <citation type="journal article" date="2001" name="Plant Physiol.">
        <title>Comprehensive expression profile analysis of the Arabidopsis Hsp70 gene family.</title>
        <authorList>
            <person name="Sung D.Y."/>
            <person name="Vierling E."/>
            <person name="Guy C.L."/>
        </authorList>
    </citation>
    <scope>NUCLEOTIDE SEQUENCE [MRNA]</scope>
    <scope>DNAK GENE SUBFAMILY</scope>
    <scope>INDUCTION</scope>
    <scope>DEVELOPMENTAL STAGE</scope>
    <source>
        <strain>cv. Columbia</strain>
    </source>
</reference>
<reference key="2">
    <citation type="journal article" date="2000" name="Nature">
        <title>Sequence and analysis of chromosome 5 of the plant Arabidopsis thaliana.</title>
        <authorList>
            <person name="Tabata S."/>
            <person name="Kaneko T."/>
            <person name="Nakamura Y."/>
            <person name="Kotani H."/>
            <person name="Kato T."/>
            <person name="Asamizu E."/>
            <person name="Miyajima N."/>
            <person name="Sasamoto S."/>
            <person name="Kimura T."/>
            <person name="Hosouchi T."/>
            <person name="Kawashima K."/>
            <person name="Kohara M."/>
            <person name="Matsumoto M."/>
            <person name="Matsuno A."/>
            <person name="Muraki A."/>
            <person name="Nakayama S."/>
            <person name="Nakazaki N."/>
            <person name="Naruo K."/>
            <person name="Okumura S."/>
            <person name="Shinpo S."/>
            <person name="Takeuchi C."/>
            <person name="Wada T."/>
            <person name="Watanabe A."/>
            <person name="Yamada M."/>
            <person name="Yasuda M."/>
            <person name="Sato S."/>
            <person name="de la Bastide M."/>
            <person name="Huang E."/>
            <person name="Spiegel L."/>
            <person name="Gnoj L."/>
            <person name="O'Shaughnessy A."/>
            <person name="Preston R."/>
            <person name="Habermann K."/>
            <person name="Murray J."/>
            <person name="Johnson D."/>
            <person name="Rohlfing T."/>
            <person name="Nelson J."/>
            <person name="Stoneking T."/>
            <person name="Pepin K."/>
            <person name="Spieth J."/>
            <person name="Sekhon M."/>
            <person name="Armstrong J."/>
            <person name="Becker M."/>
            <person name="Belter E."/>
            <person name="Cordum H."/>
            <person name="Cordes M."/>
            <person name="Courtney L."/>
            <person name="Courtney W."/>
            <person name="Dante M."/>
            <person name="Du H."/>
            <person name="Edwards J."/>
            <person name="Fryman J."/>
            <person name="Haakensen B."/>
            <person name="Lamar E."/>
            <person name="Latreille P."/>
            <person name="Leonard S."/>
            <person name="Meyer R."/>
            <person name="Mulvaney E."/>
            <person name="Ozersky P."/>
            <person name="Riley A."/>
            <person name="Strowmatt C."/>
            <person name="Wagner-McPherson C."/>
            <person name="Wollam A."/>
            <person name="Yoakum M."/>
            <person name="Bell M."/>
            <person name="Dedhia N."/>
            <person name="Parnell L."/>
            <person name="Shah R."/>
            <person name="Rodriguez M."/>
            <person name="Hoon See L."/>
            <person name="Vil D."/>
            <person name="Baker J."/>
            <person name="Kirchoff K."/>
            <person name="Toth K."/>
            <person name="King L."/>
            <person name="Bahret A."/>
            <person name="Miller B."/>
            <person name="Marra M.A."/>
            <person name="Martienssen R."/>
            <person name="McCombie W.R."/>
            <person name="Wilson R.K."/>
            <person name="Murphy G."/>
            <person name="Bancroft I."/>
            <person name="Volckaert G."/>
            <person name="Wambutt R."/>
            <person name="Duesterhoeft A."/>
            <person name="Stiekema W."/>
            <person name="Pohl T."/>
            <person name="Entian K.-D."/>
            <person name="Terryn N."/>
            <person name="Hartley N."/>
            <person name="Bent E."/>
            <person name="Johnson S."/>
            <person name="Langham S.-A."/>
            <person name="McCullagh B."/>
            <person name="Robben J."/>
            <person name="Grymonprez B."/>
            <person name="Zimmermann W."/>
            <person name="Ramsperger U."/>
            <person name="Wedler H."/>
            <person name="Balke K."/>
            <person name="Wedler E."/>
            <person name="Peters S."/>
            <person name="van Staveren M."/>
            <person name="Dirkse W."/>
            <person name="Mooijman P."/>
            <person name="Klein Lankhorst R."/>
            <person name="Weitzenegger T."/>
            <person name="Bothe G."/>
            <person name="Rose M."/>
            <person name="Hauf J."/>
            <person name="Berneiser S."/>
            <person name="Hempel S."/>
            <person name="Feldpausch M."/>
            <person name="Lamberth S."/>
            <person name="Villarroel R."/>
            <person name="Gielen J."/>
            <person name="Ardiles W."/>
            <person name="Bents O."/>
            <person name="Lemcke K."/>
            <person name="Kolesov G."/>
            <person name="Mayer K.F.X."/>
            <person name="Rudd S."/>
            <person name="Schoof H."/>
            <person name="Schueller C."/>
            <person name="Zaccaria P."/>
            <person name="Mewes H.-W."/>
            <person name="Bevan M."/>
            <person name="Fransz P.F."/>
        </authorList>
    </citation>
    <scope>NUCLEOTIDE SEQUENCE [LARGE SCALE GENOMIC DNA]</scope>
    <source>
        <strain>cv. Columbia</strain>
    </source>
</reference>
<reference key="3">
    <citation type="journal article" date="2017" name="Plant J.">
        <title>Araport11: a complete reannotation of the Arabidopsis thaliana reference genome.</title>
        <authorList>
            <person name="Cheng C.Y."/>
            <person name="Krishnakumar V."/>
            <person name="Chan A.P."/>
            <person name="Thibaud-Nissen F."/>
            <person name="Schobel S."/>
            <person name="Town C.D."/>
        </authorList>
    </citation>
    <scope>GENOME REANNOTATION</scope>
    <source>
        <strain>cv. Columbia</strain>
    </source>
</reference>
<reference key="4">
    <citation type="submission" date="2008-10" db="EMBL/GenBank/DDBJ databases">
        <title>Arabidopsis ORF clones.</title>
        <authorList>
            <person name="de los Reyes C."/>
            <person name="Quan R."/>
            <person name="Chen H."/>
            <person name="Bautista V."/>
            <person name="Kim C.J."/>
            <person name="Ecker J.R."/>
        </authorList>
    </citation>
    <scope>NUCLEOTIDE SEQUENCE [LARGE SCALE MRNA]</scope>
    <source>
        <strain>cv. Columbia</strain>
    </source>
</reference>
<reference key="5">
    <citation type="journal article" date="2001" name="Cell Stress Chaperones">
        <title>Genomic analysis of the Hsp70 superfamily in Arabidopsis thaliana.</title>
        <authorList>
            <person name="Lin B.L."/>
            <person name="Wang J.S."/>
            <person name="Liu H.C."/>
            <person name="Chen R.W."/>
            <person name="Meyer Y."/>
            <person name="Barakat A."/>
            <person name="Delseny M."/>
        </authorList>
    </citation>
    <scope>GENE FAMILY</scope>
    <scope>NOMENCLATURE</scope>
</reference>
<reference key="6">
    <citation type="journal article" date="2007" name="Mol. Cell. Proteomics">
        <title>Multidimensional protein identification technology (MudPIT) analysis of ubiquitinated proteins in plants.</title>
        <authorList>
            <person name="Maor R."/>
            <person name="Jones A."/>
            <person name="Nuehse T.S."/>
            <person name="Studholme D.J."/>
            <person name="Peck S.C."/>
            <person name="Shirasu K."/>
        </authorList>
    </citation>
    <scope>IDENTIFICATION BY MASS SPECTROMETRY [LARGE SCALE ANALYSIS]</scope>
    <source>
        <strain>cv. Landsberg erecta</strain>
    </source>
</reference>
<reference key="7">
    <citation type="journal article" date="2009" name="PLoS ONE">
        <title>Dual localized AtHscB involved in iron sulfur protein biogenesis in Arabidopsis.</title>
        <authorList>
            <person name="Xu X.M."/>
            <person name="Lin H."/>
            <person name="Latijnhouwers M."/>
            <person name="Moeller S.G."/>
        </authorList>
    </citation>
    <scope>SUBCELLULAR LOCATION</scope>
</reference>
<reference key="8">
    <citation type="journal article" date="2015" name="J. Exp. Bot.">
        <title>Identification of cleavage sites and substrate proteins for two mitochondrial intermediate peptidases in Arabidopsis thaliana.</title>
        <authorList>
            <person name="Carrie C."/>
            <person name="Venne A.S."/>
            <person name="Zahedi R.P."/>
            <person name="Soll J."/>
        </authorList>
    </citation>
    <scope>IDENTIFICATION BY MASS SPECTROMETRY</scope>
    <scope>CLEAVAGE OF TRANSIT PEPTIDE AFTER PHE-50</scope>
</reference>
<name>HSP7J_ARATH</name>
<accession>Q9LDZ0</accession>
<proteinExistence type="evidence at protein level"/>
<gene>
    <name evidence="6" type="primary">HSP70-10</name>
    <name evidence="12" type="synonym">HSC70-5</name>
    <name evidence="7" type="synonym">HSCA2</name>
    <name evidence="5" type="synonym">MTHSC70-2</name>
    <name evidence="11" type="ordered locus">At5g09590</name>
    <name evidence="13" type="ORF">F17I14_220</name>
</gene>
<keyword id="KW-0067">ATP-binding</keyword>
<keyword id="KW-0143">Chaperone</keyword>
<keyword id="KW-0496">Mitochondrion</keyword>
<keyword id="KW-0547">Nucleotide-binding</keyword>
<keyword id="KW-1185">Reference proteome</keyword>
<keyword id="KW-0346">Stress response</keyword>
<keyword id="KW-0809">Transit peptide</keyword>
<organism>
    <name type="scientific">Arabidopsis thaliana</name>
    <name type="common">Mouse-ear cress</name>
    <dbReference type="NCBI Taxonomy" id="3702"/>
    <lineage>
        <taxon>Eukaryota</taxon>
        <taxon>Viridiplantae</taxon>
        <taxon>Streptophyta</taxon>
        <taxon>Embryophyta</taxon>
        <taxon>Tracheophyta</taxon>
        <taxon>Spermatophyta</taxon>
        <taxon>Magnoliopsida</taxon>
        <taxon>eudicotyledons</taxon>
        <taxon>Gunneridae</taxon>
        <taxon>Pentapetalae</taxon>
        <taxon>rosids</taxon>
        <taxon>malvids</taxon>
        <taxon>Brassicales</taxon>
        <taxon>Brassicaceae</taxon>
        <taxon>Camelineae</taxon>
        <taxon>Arabidopsis</taxon>
    </lineage>
</organism>
<feature type="transit peptide" description="Mitochondrion" evidence="4">
    <location>
        <begin position="1"/>
        <end position="50"/>
    </location>
</feature>
<feature type="chain" id="PRO_0000415429" description="Heat shock 70 kDa protein 10, mitochondrial">
    <location>
        <begin position="51"/>
        <end position="682"/>
    </location>
</feature>
<feature type="region of interest" description="Disordered" evidence="2">
    <location>
        <begin position="646"/>
        <end position="682"/>
    </location>
</feature>
<feature type="compositionally biased region" description="Gly residues" evidence="2">
    <location>
        <begin position="651"/>
        <end position="667"/>
    </location>
</feature>
<feature type="compositionally biased region" description="Acidic residues" evidence="2">
    <location>
        <begin position="673"/>
        <end position="682"/>
    </location>
</feature>
<protein>
    <recommendedName>
        <fullName evidence="8">Heat shock 70 kDa protein 10, mitochondrial</fullName>
    </recommendedName>
    <alternativeName>
        <fullName evidence="7">Chaperone protein HscA homolog 2</fullName>
        <shortName evidence="7">AtHscA2</shortName>
    </alternativeName>
    <alternativeName>
        <fullName evidence="6">Heat shock protein 70-10</fullName>
        <shortName evidence="6">AtHsp70-10</shortName>
    </alternativeName>
    <alternativeName>
        <fullName evidence="5">Mitochondrial heat shock protein 70-2</fullName>
        <shortName evidence="5">mtHsc70-2</shortName>
    </alternativeName>
</protein>
<comment type="function">
    <text evidence="1 8">Chaperone involved in the maturation of iron-sulfur [Fe-S] cluster-containing proteins. Has a low intrinsic ATPase activity which is markedly stimulated by HSCB and ISU1 (By similarity). In cooperation with other chaperones, Hsp70s are key components that facilitate folding of de novo synthesized proteins, assist translocation of precursor proteins into organelles, and are responsible for degradation of damaged protein under stress conditions (Probable).</text>
</comment>
<comment type="subcellular location">
    <subcellularLocation>
        <location evidence="9 10">Mitochondrion</location>
    </subcellularLocation>
</comment>
<comment type="developmental stage">
    <text evidence="3">Up-regulated during seed maturation.</text>
</comment>
<comment type="induction">
    <text evidence="3">By heat shock.</text>
</comment>
<comment type="similarity">
    <text evidence="8">Belongs to the heat shock protein 70 (TC 1.A.33) family. DnaK subfamily.</text>
</comment>
<evidence type="ECO:0000250" key="1">
    <source>
        <dbReference type="UniProtKB" id="Q8GUM2"/>
    </source>
</evidence>
<evidence type="ECO:0000256" key="2">
    <source>
        <dbReference type="SAM" id="MobiDB-lite"/>
    </source>
</evidence>
<evidence type="ECO:0000269" key="3">
    <source>
    </source>
</evidence>
<evidence type="ECO:0000269" key="4">
    <source>
    </source>
</evidence>
<evidence type="ECO:0000303" key="5">
    <source>
    </source>
</evidence>
<evidence type="ECO:0000303" key="6">
    <source>
    </source>
</evidence>
<evidence type="ECO:0000303" key="7">
    <source>
    </source>
</evidence>
<evidence type="ECO:0000305" key="8"/>
<evidence type="ECO:0000305" key="9">
    <source>
    </source>
</evidence>
<evidence type="ECO:0000305" key="10">
    <source>
    </source>
</evidence>
<evidence type="ECO:0000312" key="11">
    <source>
        <dbReference type="Araport" id="AT5G09590"/>
    </source>
</evidence>
<evidence type="ECO:0000312" key="12">
    <source>
        <dbReference type="EMBL" id="AAF27638.1"/>
    </source>
</evidence>
<evidence type="ECO:0000312" key="13">
    <source>
        <dbReference type="EMBL" id="CAB89371.1"/>
    </source>
</evidence>
<sequence>MATAALLRSIRRREVVSSPFSAYRCLSSSGKASLNSSYLGQNFRSFSRAFSSKPAGNDVIGIDLGTTNSCVAVMEGKNPKVIENAEGARTTPSVVAFNTKGELLVGTPAKRQAVTNPTNTVSGTKRLIGRKFDDPQTQKEMKMVPYKIVRAPNGDAWVEANGQQYSPSQIGAFILTKMKETAEAYLGKSVTKAVVTVPAYFNDAQRQATKDAGRIAGLDVERIINEPTAAALSYGMTNKEGLIAVFDLGGGTFDVSVLEISNGVFEVKATNGDTFLGGEDFDNALLDFLVNEFKTTEGIDLAKDRLALQRLREAAEKAKIELSSTSQTEINLPFITADASGAKHFNITLTRSRFETLVNHLIERTRDPCKNCLKDAGISAKEVDEVLLVGGMTRVPKVQSIVAEIFGKSPSKGVNPDEAVAMGAALQGGILRGDVKELLLLDVTPLSLGIETLGGVFTRLITRNTTIPTKKSQVFSTAADNQTQVGIRVLQGEREMATDNKLLGEFDLVGIPPSPRGVPQIEVTFDIDANGIVTVSAKDKTTGKVQQITIRSSGGLSEDDIQKMVREAELHAQKDKERKELIDTKNTADTTIYSIEKSLGEYREKIPSEIAKEIEDAVADLRSASSGDDLNEIKAKIEAANKAVSKIGEHMSGGSGGGSAPGGGSEGGSDQAPEAEYEEVKK</sequence>
<dbReference type="EMBL" id="AF217458">
    <property type="protein sequence ID" value="AAF27638.1"/>
    <property type="molecule type" value="mRNA"/>
</dbReference>
<dbReference type="EMBL" id="AL353994">
    <property type="protein sequence ID" value="CAB89371.1"/>
    <property type="molecule type" value="Genomic_DNA"/>
</dbReference>
<dbReference type="EMBL" id="CP002688">
    <property type="protein sequence ID" value="AED91413.1"/>
    <property type="molecule type" value="Genomic_DNA"/>
</dbReference>
<dbReference type="EMBL" id="BT046197">
    <property type="protein sequence ID" value="ACI49796.1"/>
    <property type="molecule type" value="mRNA"/>
</dbReference>
<dbReference type="PIR" id="T49939">
    <property type="entry name" value="T49939"/>
</dbReference>
<dbReference type="RefSeq" id="NP_196521.1">
    <property type="nucleotide sequence ID" value="NM_120996.4"/>
</dbReference>
<dbReference type="SMR" id="Q9LDZ0"/>
<dbReference type="BioGRID" id="16096">
    <property type="interactions" value="12"/>
</dbReference>
<dbReference type="FunCoup" id="Q9LDZ0">
    <property type="interactions" value="2968"/>
</dbReference>
<dbReference type="IntAct" id="Q9LDZ0">
    <property type="interactions" value="1"/>
</dbReference>
<dbReference type="MINT" id="Q9LDZ0"/>
<dbReference type="STRING" id="3702.Q9LDZ0"/>
<dbReference type="iPTMnet" id="Q9LDZ0"/>
<dbReference type="MetOSite" id="Q9LDZ0"/>
<dbReference type="SwissPalm" id="Q9LDZ0"/>
<dbReference type="PaxDb" id="3702-AT5G09590.1"/>
<dbReference type="ProteomicsDB" id="232136"/>
<dbReference type="EnsemblPlants" id="AT5G09590.1">
    <property type="protein sequence ID" value="AT5G09590.1"/>
    <property type="gene ID" value="AT5G09590"/>
</dbReference>
<dbReference type="GeneID" id="830818"/>
<dbReference type="Gramene" id="AT5G09590.1">
    <property type="protein sequence ID" value="AT5G09590.1"/>
    <property type="gene ID" value="AT5G09590"/>
</dbReference>
<dbReference type="KEGG" id="ath:AT5G09590"/>
<dbReference type="Araport" id="AT5G09590"/>
<dbReference type="TAIR" id="AT5G09590">
    <property type="gene designation" value="MTHSC70-2"/>
</dbReference>
<dbReference type="eggNOG" id="KOG0102">
    <property type="taxonomic scope" value="Eukaryota"/>
</dbReference>
<dbReference type="HOGENOM" id="CLU_005965_2_1_1"/>
<dbReference type="InParanoid" id="Q9LDZ0"/>
<dbReference type="OMA" id="MGTDWKI"/>
<dbReference type="PhylomeDB" id="Q9LDZ0"/>
<dbReference type="CD-CODE" id="4299E36E">
    <property type="entry name" value="Nucleolus"/>
</dbReference>
<dbReference type="PRO" id="PR:Q9LDZ0"/>
<dbReference type="Proteomes" id="UP000006548">
    <property type="component" value="Chromosome 5"/>
</dbReference>
<dbReference type="ExpressionAtlas" id="Q9LDZ0">
    <property type="expression patterns" value="baseline and differential"/>
</dbReference>
<dbReference type="GO" id="GO:0005829">
    <property type="term" value="C:cytosol"/>
    <property type="evidence" value="ECO:0007005"/>
    <property type="project" value="TAIR"/>
</dbReference>
<dbReference type="GO" id="GO:0005739">
    <property type="term" value="C:mitochondrion"/>
    <property type="evidence" value="ECO:0000314"/>
    <property type="project" value="TAIR"/>
</dbReference>
<dbReference type="GO" id="GO:0009505">
    <property type="term" value="C:plant-type cell wall"/>
    <property type="evidence" value="ECO:0007005"/>
    <property type="project" value="TAIR"/>
</dbReference>
<dbReference type="GO" id="GO:0000325">
    <property type="term" value="C:plant-type vacuole"/>
    <property type="evidence" value="ECO:0007005"/>
    <property type="project" value="TAIR"/>
</dbReference>
<dbReference type="GO" id="GO:0005886">
    <property type="term" value="C:plasma membrane"/>
    <property type="evidence" value="ECO:0007005"/>
    <property type="project" value="TAIR"/>
</dbReference>
<dbReference type="GO" id="GO:0005524">
    <property type="term" value="F:ATP binding"/>
    <property type="evidence" value="ECO:0007005"/>
    <property type="project" value="TAIR"/>
</dbReference>
<dbReference type="GO" id="GO:0140662">
    <property type="term" value="F:ATP-dependent protein folding chaperone"/>
    <property type="evidence" value="ECO:0007669"/>
    <property type="project" value="InterPro"/>
</dbReference>
<dbReference type="GO" id="GO:0051082">
    <property type="term" value="F:unfolded protein binding"/>
    <property type="evidence" value="ECO:0007669"/>
    <property type="project" value="InterPro"/>
</dbReference>
<dbReference type="GO" id="GO:0009408">
    <property type="term" value="P:response to heat"/>
    <property type="evidence" value="ECO:0000270"/>
    <property type="project" value="TAIR"/>
</dbReference>
<dbReference type="GO" id="GO:0009615">
    <property type="term" value="P:response to virus"/>
    <property type="evidence" value="ECO:0000270"/>
    <property type="project" value="TAIR"/>
</dbReference>
<dbReference type="CDD" id="cd11733">
    <property type="entry name" value="ASKHA_NBD_HSP70_HSPA9"/>
    <property type="match status" value="1"/>
</dbReference>
<dbReference type="FunFam" id="2.60.34.10:FF:000014">
    <property type="entry name" value="Chaperone protein DnaK HSP70"/>
    <property type="match status" value="1"/>
</dbReference>
<dbReference type="FunFam" id="3.30.420.40:FF:000020">
    <property type="entry name" value="Chaperone protein HscA homolog"/>
    <property type="match status" value="1"/>
</dbReference>
<dbReference type="FunFam" id="3.30.30.30:FF:000003">
    <property type="entry name" value="Heat shock protein 9"/>
    <property type="match status" value="1"/>
</dbReference>
<dbReference type="FunFam" id="1.20.1270.10:FF:000001">
    <property type="entry name" value="Molecular chaperone DnaK"/>
    <property type="match status" value="1"/>
</dbReference>
<dbReference type="FunFam" id="3.30.420.40:FF:000004">
    <property type="entry name" value="Molecular chaperone DnaK"/>
    <property type="match status" value="1"/>
</dbReference>
<dbReference type="FunFam" id="3.90.640.10:FF:000003">
    <property type="entry name" value="Molecular chaperone DnaK"/>
    <property type="match status" value="1"/>
</dbReference>
<dbReference type="Gene3D" id="1.20.1270.10">
    <property type="match status" value="1"/>
</dbReference>
<dbReference type="Gene3D" id="3.30.420.40">
    <property type="match status" value="2"/>
</dbReference>
<dbReference type="Gene3D" id="3.90.640.10">
    <property type="entry name" value="Actin, Chain A, domain 4"/>
    <property type="match status" value="1"/>
</dbReference>
<dbReference type="Gene3D" id="2.60.34.10">
    <property type="entry name" value="Substrate Binding Domain Of DNAk, Chain A, domain 1"/>
    <property type="match status" value="1"/>
</dbReference>
<dbReference type="HAMAP" id="MF_00332">
    <property type="entry name" value="DnaK"/>
    <property type="match status" value="1"/>
</dbReference>
<dbReference type="InterPro" id="IPR043129">
    <property type="entry name" value="ATPase_NBD"/>
</dbReference>
<dbReference type="InterPro" id="IPR012725">
    <property type="entry name" value="Chaperone_DnaK"/>
</dbReference>
<dbReference type="InterPro" id="IPR018181">
    <property type="entry name" value="Heat_shock_70_CS"/>
</dbReference>
<dbReference type="InterPro" id="IPR029048">
    <property type="entry name" value="HSP70_C_sf"/>
</dbReference>
<dbReference type="InterPro" id="IPR029047">
    <property type="entry name" value="HSP70_peptide-bd_sf"/>
</dbReference>
<dbReference type="InterPro" id="IPR013126">
    <property type="entry name" value="Hsp_70_fam"/>
</dbReference>
<dbReference type="NCBIfam" id="NF001413">
    <property type="entry name" value="PRK00290.1"/>
    <property type="match status" value="1"/>
</dbReference>
<dbReference type="NCBIfam" id="TIGR02350">
    <property type="entry name" value="prok_dnaK"/>
    <property type="match status" value="1"/>
</dbReference>
<dbReference type="PANTHER" id="PTHR19375">
    <property type="entry name" value="HEAT SHOCK PROTEIN 70KDA"/>
    <property type="match status" value="1"/>
</dbReference>
<dbReference type="Pfam" id="PF00012">
    <property type="entry name" value="HSP70"/>
    <property type="match status" value="1"/>
</dbReference>
<dbReference type="PRINTS" id="PR00301">
    <property type="entry name" value="HEATSHOCK70"/>
</dbReference>
<dbReference type="SUPFAM" id="SSF53067">
    <property type="entry name" value="Actin-like ATPase domain"/>
    <property type="match status" value="2"/>
</dbReference>
<dbReference type="SUPFAM" id="SSF100920">
    <property type="entry name" value="Heat shock protein 70kD (HSP70), peptide-binding domain"/>
    <property type="match status" value="1"/>
</dbReference>
<dbReference type="PROSITE" id="PS00297">
    <property type="entry name" value="HSP70_1"/>
    <property type="match status" value="1"/>
</dbReference>
<dbReference type="PROSITE" id="PS00329">
    <property type="entry name" value="HSP70_2"/>
    <property type="match status" value="1"/>
</dbReference>
<dbReference type="PROSITE" id="PS01036">
    <property type="entry name" value="HSP70_3"/>
    <property type="match status" value="1"/>
</dbReference>